<accession>B0B7R0</accession>
<dbReference type="EMBL" id="AM884176">
    <property type="protein sequence ID" value="CAP04036.1"/>
    <property type="molecule type" value="Genomic_DNA"/>
</dbReference>
<dbReference type="RefSeq" id="WP_009873740.1">
    <property type="nucleotide sequence ID" value="NC_010287.1"/>
</dbReference>
<dbReference type="RefSeq" id="YP_001654671.1">
    <property type="nucleotide sequence ID" value="NC_010287.1"/>
</dbReference>
<dbReference type="SMR" id="B0B7R0"/>
<dbReference type="KEGG" id="ctb:CTL0595"/>
<dbReference type="PATRIC" id="fig|471472.4.peg.641"/>
<dbReference type="HOGENOM" id="CLU_017633_0_7_0"/>
<dbReference type="Proteomes" id="UP001154402">
    <property type="component" value="Chromosome"/>
</dbReference>
<dbReference type="GO" id="GO:0005737">
    <property type="term" value="C:cytoplasm"/>
    <property type="evidence" value="ECO:0007669"/>
    <property type="project" value="UniProtKB-SubCell"/>
</dbReference>
<dbReference type="GO" id="GO:0005524">
    <property type="term" value="F:ATP binding"/>
    <property type="evidence" value="ECO:0007669"/>
    <property type="project" value="InterPro"/>
</dbReference>
<dbReference type="GO" id="GO:0031072">
    <property type="term" value="F:heat shock protein binding"/>
    <property type="evidence" value="ECO:0007669"/>
    <property type="project" value="InterPro"/>
</dbReference>
<dbReference type="GO" id="GO:0051082">
    <property type="term" value="F:unfolded protein binding"/>
    <property type="evidence" value="ECO:0007669"/>
    <property type="project" value="UniProtKB-UniRule"/>
</dbReference>
<dbReference type="GO" id="GO:0008270">
    <property type="term" value="F:zinc ion binding"/>
    <property type="evidence" value="ECO:0007669"/>
    <property type="project" value="UniProtKB-UniRule"/>
</dbReference>
<dbReference type="GO" id="GO:0051085">
    <property type="term" value="P:chaperone cofactor-dependent protein refolding"/>
    <property type="evidence" value="ECO:0007669"/>
    <property type="project" value="TreeGrafter"/>
</dbReference>
<dbReference type="GO" id="GO:0006260">
    <property type="term" value="P:DNA replication"/>
    <property type="evidence" value="ECO:0007669"/>
    <property type="project" value="UniProtKB-KW"/>
</dbReference>
<dbReference type="GO" id="GO:0042026">
    <property type="term" value="P:protein refolding"/>
    <property type="evidence" value="ECO:0007669"/>
    <property type="project" value="TreeGrafter"/>
</dbReference>
<dbReference type="GO" id="GO:0009408">
    <property type="term" value="P:response to heat"/>
    <property type="evidence" value="ECO:0007669"/>
    <property type="project" value="InterPro"/>
</dbReference>
<dbReference type="CDD" id="cd06257">
    <property type="entry name" value="DnaJ"/>
    <property type="match status" value="1"/>
</dbReference>
<dbReference type="CDD" id="cd10747">
    <property type="entry name" value="DnaJ_C"/>
    <property type="match status" value="1"/>
</dbReference>
<dbReference type="CDD" id="cd10719">
    <property type="entry name" value="DnaJ_zf"/>
    <property type="match status" value="1"/>
</dbReference>
<dbReference type="FunFam" id="1.10.287.110:FF:000034">
    <property type="entry name" value="Chaperone protein DnaJ"/>
    <property type="match status" value="1"/>
</dbReference>
<dbReference type="FunFam" id="2.60.260.20:FF:000005">
    <property type="entry name" value="Chaperone protein dnaJ 1, mitochondrial"/>
    <property type="match status" value="1"/>
</dbReference>
<dbReference type="FunFam" id="2.10.230.10:FF:000002">
    <property type="entry name" value="Molecular chaperone DnaJ"/>
    <property type="match status" value="1"/>
</dbReference>
<dbReference type="Gene3D" id="1.10.287.110">
    <property type="entry name" value="DnaJ domain"/>
    <property type="match status" value="1"/>
</dbReference>
<dbReference type="Gene3D" id="2.10.230.10">
    <property type="entry name" value="Heat shock protein DnaJ, cysteine-rich domain"/>
    <property type="match status" value="1"/>
</dbReference>
<dbReference type="Gene3D" id="2.60.260.20">
    <property type="entry name" value="Urease metallochaperone UreE, N-terminal domain"/>
    <property type="match status" value="2"/>
</dbReference>
<dbReference type="HAMAP" id="MF_01152">
    <property type="entry name" value="DnaJ"/>
    <property type="match status" value="1"/>
</dbReference>
<dbReference type="InterPro" id="IPR012724">
    <property type="entry name" value="DnaJ"/>
</dbReference>
<dbReference type="InterPro" id="IPR002939">
    <property type="entry name" value="DnaJ_C"/>
</dbReference>
<dbReference type="InterPro" id="IPR001623">
    <property type="entry name" value="DnaJ_domain"/>
</dbReference>
<dbReference type="InterPro" id="IPR018253">
    <property type="entry name" value="DnaJ_domain_CS"/>
</dbReference>
<dbReference type="InterPro" id="IPR008971">
    <property type="entry name" value="HSP40/DnaJ_pept-bd"/>
</dbReference>
<dbReference type="InterPro" id="IPR001305">
    <property type="entry name" value="HSP_DnaJ_Cys-rich_dom"/>
</dbReference>
<dbReference type="InterPro" id="IPR036410">
    <property type="entry name" value="HSP_DnaJ_Cys-rich_dom_sf"/>
</dbReference>
<dbReference type="InterPro" id="IPR036869">
    <property type="entry name" value="J_dom_sf"/>
</dbReference>
<dbReference type="NCBIfam" id="TIGR02349">
    <property type="entry name" value="DnaJ_bact"/>
    <property type="match status" value="1"/>
</dbReference>
<dbReference type="NCBIfam" id="NF008035">
    <property type="entry name" value="PRK10767.1"/>
    <property type="match status" value="1"/>
</dbReference>
<dbReference type="NCBIfam" id="NF010877">
    <property type="entry name" value="PRK14284.1"/>
    <property type="match status" value="1"/>
</dbReference>
<dbReference type="PANTHER" id="PTHR43096:SF48">
    <property type="entry name" value="CHAPERONE PROTEIN DNAJ"/>
    <property type="match status" value="1"/>
</dbReference>
<dbReference type="PANTHER" id="PTHR43096">
    <property type="entry name" value="DNAJ HOMOLOG 1, MITOCHONDRIAL-RELATED"/>
    <property type="match status" value="1"/>
</dbReference>
<dbReference type="Pfam" id="PF00226">
    <property type="entry name" value="DnaJ"/>
    <property type="match status" value="1"/>
</dbReference>
<dbReference type="Pfam" id="PF01556">
    <property type="entry name" value="DnaJ_C"/>
    <property type="match status" value="1"/>
</dbReference>
<dbReference type="Pfam" id="PF00684">
    <property type="entry name" value="DnaJ_CXXCXGXG"/>
    <property type="match status" value="1"/>
</dbReference>
<dbReference type="PRINTS" id="PR00625">
    <property type="entry name" value="JDOMAIN"/>
</dbReference>
<dbReference type="SMART" id="SM00271">
    <property type="entry name" value="DnaJ"/>
    <property type="match status" value="1"/>
</dbReference>
<dbReference type="SUPFAM" id="SSF46565">
    <property type="entry name" value="Chaperone J-domain"/>
    <property type="match status" value="1"/>
</dbReference>
<dbReference type="SUPFAM" id="SSF57938">
    <property type="entry name" value="DnaJ/Hsp40 cysteine-rich domain"/>
    <property type="match status" value="1"/>
</dbReference>
<dbReference type="SUPFAM" id="SSF49493">
    <property type="entry name" value="HSP40/DnaJ peptide-binding domain"/>
    <property type="match status" value="2"/>
</dbReference>
<dbReference type="PROSITE" id="PS00636">
    <property type="entry name" value="DNAJ_1"/>
    <property type="match status" value="1"/>
</dbReference>
<dbReference type="PROSITE" id="PS50076">
    <property type="entry name" value="DNAJ_2"/>
    <property type="match status" value="1"/>
</dbReference>
<dbReference type="PROSITE" id="PS51188">
    <property type="entry name" value="ZF_CR"/>
    <property type="match status" value="1"/>
</dbReference>
<reference key="1">
    <citation type="journal article" date="2008" name="Genome Res.">
        <title>Chlamydia trachomatis: genome sequence analysis of lymphogranuloma venereum isolates.</title>
        <authorList>
            <person name="Thomson N.R."/>
            <person name="Holden M.T.G."/>
            <person name="Carder C."/>
            <person name="Lennard N."/>
            <person name="Lockey S.J."/>
            <person name="Marsh P."/>
            <person name="Skipp P."/>
            <person name="O'Connor C.D."/>
            <person name="Goodhead I."/>
            <person name="Norbertzcak H."/>
            <person name="Harris B."/>
            <person name="Ormond D."/>
            <person name="Rance R."/>
            <person name="Quail M.A."/>
            <person name="Parkhill J."/>
            <person name="Stephens R.S."/>
            <person name="Clarke I.N."/>
        </authorList>
    </citation>
    <scope>NUCLEOTIDE SEQUENCE [LARGE SCALE GENOMIC DNA]</scope>
    <source>
        <strain>ATCC VR-902B / DSM 19102 / 434/Bu</strain>
    </source>
</reference>
<feature type="chain" id="PRO_1000137671" description="Chaperone protein DnaJ">
    <location>
        <begin position="1"/>
        <end position="392"/>
    </location>
</feature>
<feature type="domain" description="J" evidence="1">
    <location>
        <begin position="2"/>
        <end position="67"/>
    </location>
</feature>
<feature type="repeat" description="CXXCXGXG motif">
    <location>
        <begin position="162"/>
        <end position="169"/>
    </location>
</feature>
<feature type="repeat" description="CXXCXGXG motif">
    <location>
        <begin position="179"/>
        <end position="186"/>
    </location>
</feature>
<feature type="repeat" description="CXXCXGXG motif">
    <location>
        <begin position="201"/>
        <end position="208"/>
    </location>
</feature>
<feature type="repeat" description="CXXCXGXG motif">
    <location>
        <begin position="215"/>
        <end position="222"/>
    </location>
</feature>
<feature type="zinc finger region" description="CR-type" evidence="1">
    <location>
        <begin position="149"/>
        <end position="227"/>
    </location>
</feature>
<feature type="binding site" evidence="1">
    <location>
        <position position="162"/>
    </location>
    <ligand>
        <name>Zn(2+)</name>
        <dbReference type="ChEBI" id="CHEBI:29105"/>
        <label>1</label>
    </ligand>
</feature>
<feature type="binding site" evidence="1">
    <location>
        <position position="165"/>
    </location>
    <ligand>
        <name>Zn(2+)</name>
        <dbReference type="ChEBI" id="CHEBI:29105"/>
        <label>1</label>
    </ligand>
</feature>
<feature type="binding site" evidence="1">
    <location>
        <position position="179"/>
    </location>
    <ligand>
        <name>Zn(2+)</name>
        <dbReference type="ChEBI" id="CHEBI:29105"/>
        <label>2</label>
    </ligand>
</feature>
<feature type="binding site" evidence="1">
    <location>
        <position position="182"/>
    </location>
    <ligand>
        <name>Zn(2+)</name>
        <dbReference type="ChEBI" id="CHEBI:29105"/>
        <label>2</label>
    </ligand>
</feature>
<feature type="binding site" evidence="1">
    <location>
        <position position="201"/>
    </location>
    <ligand>
        <name>Zn(2+)</name>
        <dbReference type="ChEBI" id="CHEBI:29105"/>
        <label>2</label>
    </ligand>
</feature>
<feature type="binding site" evidence="1">
    <location>
        <position position="204"/>
    </location>
    <ligand>
        <name>Zn(2+)</name>
        <dbReference type="ChEBI" id="CHEBI:29105"/>
        <label>2</label>
    </ligand>
</feature>
<feature type="binding site" evidence="1">
    <location>
        <position position="215"/>
    </location>
    <ligand>
        <name>Zn(2+)</name>
        <dbReference type="ChEBI" id="CHEBI:29105"/>
        <label>1</label>
    </ligand>
</feature>
<feature type="binding site" evidence="1">
    <location>
        <position position="218"/>
    </location>
    <ligand>
        <name>Zn(2+)</name>
        <dbReference type="ChEBI" id="CHEBI:29105"/>
        <label>1</label>
    </ligand>
</feature>
<organism>
    <name type="scientific">Chlamydia trachomatis serovar L2 (strain ATCC VR-902B / DSM 19102 / 434/Bu)</name>
    <dbReference type="NCBI Taxonomy" id="471472"/>
    <lineage>
        <taxon>Bacteria</taxon>
        <taxon>Pseudomonadati</taxon>
        <taxon>Chlamydiota</taxon>
        <taxon>Chlamydiia</taxon>
        <taxon>Chlamydiales</taxon>
        <taxon>Chlamydiaceae</taxon>
        <taxon>Chlamydia/Chlamydophila group</taxon>
        <taxon>Chlamydia</taxon>
    </lineage>
</organism>
<protein>
    <recommendedName>
        <fullName evidence="1">Chaperone protein DnaJ</fullName>
    </recommendedName>
</protein>
<proteinExistence type="inferred from homology"/>
<evidence type="ECO:0000255" key="1">
    <source>
        <dbReference type="HAMAP-Rule" id="MF_01152"/>
    </source>
</evidence>
<name>DNAJ_CHLT2</name>
<sequence length="392" mass="41916">MDYYTILGVAKTATPEEIKKAYRKLAVKYHPDKNPGDAEAERRFKEVSEAYEVLGDAQKRESYDRYGKDGPFAGAGGFGGAGMGNMEDALRTFMGAFGGDFGGNGGGFFEGLFGGLGEAFGMRGGSESSRQGASKKVHITLSFEEAAKGVEKELLVSGYKSCDACSGSGANTAKGVKVCDRCKGSGQVVQSRGFFSMASTCPDCSGEGRVITDPCSVCRGQGRIKDKRSVHVNIPAGVDSGMRLKMEGYGDAGQNGAPAGDLYVFIDVEPHPVFERHGDDLVLELPIGFVDAALGIKKEIPTLLKEGTCRLSIPEGIQSGTVLKVRGQGFPNVHGKSRGDLLVRVSVETPQHLSNEQKDLLRQFAATEKAENFPKKRSFLDKIKGFFSDFAV</sequence>
<comment type="function">
    <text evidence="1">Participates actively in the response to hyperosmotic and heat shock by preventing the aggregation of stress-denatured proteins and by disaggregating proteins, also in an autonomous, DnaK-independent fashion. Unfolded proteins bind initially to DnaJ; upon interaction with the DnaJ-bound protein, DnaK hydrolyzes its bound ATP, resulting in the formation of a stable complex. GrpE releases ADP from DnaK; ATP binding to DnaK triggers the release of the substrate protein, thus completing the reaction cycle. Several rounds of ATP-dependent interactions between DnaJ, DnaK and GrpE are required for fully efficient folding. Also involved, together with DnaK and GrpE, in the DNA replication of plasmids through activation of initiation proteins.</text>
</comment>
<comment type="cofactor">
    <cofactor evidence="1">
        <name>Zn(2+)</name>
        <dbReference type="ChEBI" id="CHEBI:29105"/>
    </cofactor>
    <text evidence="1">Binds 2 Zn(2+) ions per monomer.</text>
</comment>
<comment type="subunit">
    <text evidence="1">Homodimer.</text>
</comment>
<comment type="subcellular location">
    <subcellularLocation>
        <location evidence="1">Cytoplasm</location>
    </subcellularLocation>
</comment>
<comment type="domain">
    <text evidence="1">The J domain is necessary and sufficient to stimulate DnaK ATPase activity. Zinc center 1 plays an important role in the autonomous, DnaK-independent chaperone activity of DnaJ. Zinc center 2 is essential for interaction with DnaK and for DnaJ activity.</text>
</comment>
<comment type="similarity">
    <text evidence="1">Belongs to the DnaJ family.</text>
</comment>
<keyword id="KW-0143">Chaperone</keyword>
<keyword id="KW-0963">Cytoplasm</keyword>
<keyword id="KW-0235">DNA replication</keyword>
<keyword id="KW-0479">Metal-binding</keyword>
<keyword id="KW-0677">Repeat</keyword>
<keyword id="KW-0346">Stress response</keyword>
<keyword id="KW-0862">Zinc</keyword>
<keyword id="KW-0863">Zinc-finger</keyword>
<gene>
    <name evidence="1" type="primary">dnaJ</name>
    <name type="ordered locus">CTL0595</name>
</gene>